<proteinExistence type="inferred from homology"/>
<feature type="chain" id="PRO_1000099030" description="NH(3)-dependent NAD(+) synthetase">
    <location>
        <begin position="1"/>
        <end position="275"/>
    </location>
</feature>
<feature type="binding site" evidence="1">
    <location>
        <begin position="46"/>
        <end position="53"/>
    </location>
    <ligand>
        <name>ATP</name>
        <dbReference type="ChEBI" id="CHEBI:30616"/>
    </ligand>
</feature>
<feature type="binding site" evidence="1">
    <location>
        <position position="52"/>
    </location>
    <ligand>
        <name>Mg(2+)</name>
        <dbReference type="ChEBI" id="CHEBI:18420"/>
    </ligand>
</feature>
<feature type="binding site" evidence="1">
    <location>
        <position position="141"/>
    </location>
    <ligand>
        <name>deamido-NAD(+)</name>
        <dbReference type="ChEBI" id="CHEBI:58437"/>
    </ligand>
</feature>
<feature type="binding site" evidence="1">
    <location>
        <position position="161"/>
    </location>
    <ligand>
        <name>ATP</name>
        <dbReference type="ChEBI" id="CHEBI:30616"/>
    </ligand>
</feature>
<feature type="binding site" evidence="1">
    <location>
        <position position="166"/>
    </location>
    <ligand>
        <name>Mg(2+)</name>
        <dbReference type="ChEBI" id="CHEBI:18420"/>
    </ligand>
</feature>
<feature type="binding site" evidence="1">
    <location>
        <position position="174"/>
    </location>
    <ligand>
        <name>deamido-NAD(+)</name>
        <dbReference type="ChEBI" id="CHEBI:58437"/>
    </ligand>
</feature>
<feature type="binding site" evidence="1">
    <location>
        <position position="181"/>
    </location>
    <ligand>
        <name>deamido-NAD(+)</name>
        <dbReference type="ChEBI" id="CHEBI:58437"/>
    </ligand>
</feature>
<feature type="binding site" evidence="1">
    <location>
        <position position="190"/>
    </location>
    <ligand>
        <name>ATP</name>
        <dbReference type="ChEBI" id="CHEBI:30616"/>
    </ligand>
</feature>
<feature type="binding site" evidence="1">
    <location>
        <position position="212"/>
    </location>
    <ligand>
        <name>ATP</name>
        <dbReference type="ChEBI" id="CHEBI:30616"/>
    </ligand>
</feature>
<feature type="binding site" evidence="1">
    <location>
        <begin position="261"/>
        <end position="262"/>
    </location>
    <ligand>
        <name>deamido-NAD(+)</name>
        <dbReference type="ChEBI" id="CHEBI:58437"/>
    </ligand>
</feature>
<name>NADE_LIMRJ</name>
<protein>
    <recommendedName>
        <fullName evidence="1">NH(3)-dependent NAD(+) synthetase</fullName>
        <ecNumber evidence="1">6.3.1.5</ecNumber>
    </recommendedName>
</protein>
<evidence type="ECO:0000255" key="1">
    <source>
        <dbReference type="HAMAP-Rule" id="MF_00193"/>
    </source>
</evidence>
<dbReference type="EC" id="6.3.1.5" evidence="1"/>
<dbReference type="EMBL" id="AP007281">
    <property type="protein sequence ID" value="BAG24789.1"/>
    <property type="molecule type" value="Genomic_DNA"/>
</dbReference>
<dbReference type="RefSeq" id="WP_003667309.1">
    <property type="nucleotide sequence ID" value="NC_010609.1"/>
</dbReference>
<dbReference type="SMR" id="B2G5Q7"/>
<dbReference type="KEGG" id="lrf:LAR_0273"/>
<dbReference type="HOGENOM" id="CLU_059327_3_0_9"/>
<dbReference type="UniPathway" id="UPA00253">
    <property type="reaction ID" value="UER00333"/>
</dbReference>
<dbReference type="GO" id="GO:0005737">
    <property type="term" value="C:cytoplasm"/>
    <property type="evidence" value="ECO:0007669"/>
    <property type="project" value="InterPro"/>
</dbReference>
<dbReference type="GO" id="GO:0005524">
    <property type="term" value="F:ATP binding"/>
    <property type="evidence" value="ECO:0007669"/>
    <property type="project" value="UniProtKB-UniRule"/>
</dbReference>
<dbReference type="GO" id="GO:0004359">
    <property type="term" value="F:glutaminase activity"/>
    <property type="evidence" value="ECO:0007669"/>
    <property type="project" value="InterPro"/>
</dbReference>
<dbReference type="GO" id="GO:0046872">
    <property type="term" value="F:metal ion binding"/>
    <property type="evidence" value="ECO:0007669"/>
    <property type="project" value="UniProtKB-KW"/>
</dbReference>
<dbReference type="GO" id="GO:0003952">
    <property type="term" value="F:NAD+ synthase (glutamine-hydrolyzing) activity"/>
    <property type="evidence" value="ECO:0007669"/>
    <property type="project" value="InterPro"/>
</dbReference>
<dbReference type="GO" id="GO:0008795">
    <property type="term" value="F:NAD+ synthase activity"/>
    <property type="evidence" value="ECO:0007669"/>
    <property type="project" value="UniProtKB-UniRule"/>
</dbReference>
<dbReference type="GO" id="GO:0009435">
    <property type="term" value="P:NAD biosynthetic process"/>
    <property type="evidence" value="ECO:0007669"/>
    <property type="project" value="UniProtKB-UniRule"/>
</dbReference>
<dbReference type="CDD" id="cd00553">
    <property type="entry name" value="NAD_synthase"/>
    <property type="match status" value="1"/>
</dbReference>
<dbReference type="FunFam" id="3.40.50.620:FF:000015">
    <property type="entry name" value="NH(3)-dependent NAD(+) synthetase"/>
    <property type="match status" value="1"/>
</dbReference>
<dbReference type="Gene3D" id="3.40.50.620">
    <property type="entry name" value="HUPs"/>
    <property type="match status" value="1"/>
</dbReference>
<dbReference type="HAMAP" id="MF_00193">
    <property type="entry name" value="NadE_ammonia_dep"/>
    <property type="match status" value="1"/>
</dbReference>
<dbReference type="InterPro" id="IPR022310">
    <property type="entry name" value="NAD/GMP_synthase"/>
</dbReference>
<dbReference type="InterPro" id="IPR003694">
    <property type="entry name" value="NAD_synthase"/>
</dbReference>
<dbReference type="InterPro" id="IPR022926">
    <property type="entry name" value="NH(3)-dep_NAD(+)_synth"/>
</dbReference>
<dbReference type="InterPro" id="IPR014729">
    <property type="entry name" value="Rossmann-like_a/b/a_fold"/>
</dbReference>
<dbReference type="NCBIfam" id="TIGR00552">
    <property type="entry name" value="nadE"/>
    <property type="match status" value="1"/>
</dbReference>
<dbReference type="NCBIfam" id="NF001979">
    <property type="entry name" value="PRK00768.1"/>
    <property type="match status" value="1"/>
</dbReference>
<dbReference type="PANTHER" id="PTHR23090">
    <property type="entry name" value="NH 3 /GLUTAMINE-DEPENDENT NAD + SYNTHETASE"/>
    <property type="match status" value="1"/>
</dbReference>
<dbReference type="PANTHER" id="PTHR23090:SF7">
    <property type="entry name" value="NH(3)-DEPENDENT NAD(+) SYNTHETASE"/>
    <property type="match status" value="1"/>
</dbReference>
<dbReference type="Pfam" id="PF02540">
    <property type="entry name" value="NAD_synthase"/>
    <property type="match status" value="1"/>
</dbReference>
<dbReference type="SUPFAM" id="SSF52402">
    <property type="entry name" value="Adenine nucleotide alpha hydrolases-like"/>
    <property type="match status" value="1"/>
</dbReference>
<reference key="1">
    <citation type="journal article" date="2008" name="DNA Res.">
        <title>Comparative genome analysis of Lactobacillus reuteri and Lactobacillus fermentum reveal a genomic island for reuterin and cobalamin production.</title>
        <authorList>
            <person name="Morita H."/>
            <person name="Toh H."/>
            <person name="Fukuda S."/>
            <person name="Horikawa H."/>
            <person name="Oshima K."/>
            <person name="Suzuki T."/>
            <person name="Murakami M."/>
            <person name="Hisamatsu S."/>
            <person name="Kato Y."/>
            <person name="Takizawa T."/>
            <person name="Fukuoka H."/>
            <person name="Yoshimura T."/>
            <person name="Itoh K."/>
            <person name="O'Sullivan D.J."/>
            <person name="McKay L.L."/>
            <person name="Ohno H."/>
            <person name="Kikuchi J."/>
            <person name="Masaoka T."/>
            <person name="Hattori M."/>
        </authorList>
    </citation>
    <scope>NUCLEOTIDE SEQUENCE [LARGE SCALE GENOMIC DNA]</scope>
    <source>
        <strain>JCM 1112</strain>
    </source>
</reference>
<sequence length="275" mass="30540">MRKYQEEIINALGVNSQIDPQAEVTKRVQFICDFLQTTKMKALVLGISGGQDSSLAGRLSQLAVEKLREETGDNEYQFIAVRLPYGEQADESDAMFAINDFIKPDKIMRVNIKAATDAMVASLNEAGTPISDFSKGNIKARERMIVQYAIGGENKGAVVGTDHAAEAVTGFYTKFGDGGADITPLSGLDKRQGKALLQYLGAPAKLYDKTPTADLEEDKPMRPDEEALGVRYDEIDDYLEGREVSPAAAEKIESWYRRTQHKRHLPIAPYDTWWK</sequence>
<comment type="function">
    <text evidence="1">Catalyzes the ATP-dependent amidation of deamido-NAD to form NAD. Uses ammonia as a nitrogen source.</text>
</comment>
<comment type="catalytic activity">
    <reaction evidence="1">
        <text>deamido-NAD(+) + NH4(+) + ATP = AMP + diphosphate + NAD(+) + H(+)</text>
        <dbReference type="Rhea" id="RHEA:21188"/>
        <dbReference type="ChEBI" id="CHEBI:15378"/>
        <dbReference type="ChEBI" id="CHEBI:28938"/>
        <dbReference type="ChEBI" id="CHEBI:30616"/>
        <dbReference type="ChEBI" id="CHEBI:33019"/>
        <dbReference type="ChEBI" id="CHEBI:57540"/>
        <dbReference type="ChEBI" id="CHEBI:58437"/>
        <dbReference type="ChEBI" id="CHEBI:456215"/>
        <dbReference type="EC" id="6.3.1.5"/>
    </reaction>
</comment>
<comment type="pathway">
    <text evidence="1">Cofactor biosynthesis; NAD(+) biosynthesis; NAD(+) from deamido-NAD(+) (ammonia route): step 1/1.</text>
</comment>
<comment type="subunit">
    <text evidence="1">Homodimer.</text>
</comment>
<comment type="similarity">
    <text evidence="1">Belongs to the NAD synthetase family.</text>
</comment>
<accession>B2G5Q7</accession>
<keyword id="KW-0067">ATP-binding</keyword>
<keyword id="KW-0436">Ligase</keyword>
<keyword id="KW-0460">Magnesium</keyword>
<keyword id="KW-0479">Metal-binding</keyword>
<keyword id="KW-0520">NAD</keyword>
<keyword id="KW-0547">Nucleotide-binding</keyword>
<gene>
    <name evidence="1" type="primary">nadE</name>
    <name type="ordered locus">LAR_0273</name>
</gene>
<organism>
    <name type="scientific">Limosilactobacillus reuteri subsp. reuteri (strain JCM 1112)</name>
    <name type="common">Lactobacillus reuteri</name>
    <dbReference type="NCBI Taxonomy" id="557433"/>
    <lineage>
        <taxon>Bacteria</taxon>
        <taxon>Bacillati</taxon>
        <taxon>Bacillota</taxon>
        <taxon>Bacilli</taxon>
        <taxon>Lactobacillales</taxon>
        <taxon>Lactobacillaceae</taxon>
        <taxon>Limosilactobacillus</taxon>
    </lineage>
</organism>